<name>SORC_PENRW</name>
<proteinExistence type="inferred from homology"/>
<protein>
    <recommendedName>
        <fullName evidence="7">FAD-dependent monooxygenase sorC</fullName>
        <ecNumber evidence="9">1.-.-.-</ecNumber>
    </recommendedName>
    <alternativeName>
        <fullName evidence="7">Sorbicillinoid biosynthetic cluster protein C</fullName>
    </alternativeName>
</protein>
<reference key="1">
    <citation type="journal article" date="2008" name="Nat. Biotechnol.">
        <title>Genome sequencing and analysis of the filamentous fungus Penicillium chrysogenum.</title>
        <authorList>
            <person name="van den Berg M.A."/>
            <person name="Albang R."/>
            <person name="Albermann K."/>
            <person name="Badger J.H."/>
            <person name="Daran J.-M."/>
            <person name="Driessen A.J.M."/>
            <person name="Garcia-Estrada C."/>
            <person name="Fedorova N.D."/>
            <person name="Harris D.M."/>
            <person name="Heijne W.H.M."/>
            <person name="Joardar V.S."/>
            <person name="Kiel J.A.K.W."/>
            <person name="Kovalchuk A."/>
            <person name="Martin J.F."/>
            <person name="Nierman W.C."/>
            <person name="Nijland J.G."/>
            <person name="Pronk J.T."/>
            <person name="Roubos J.A."/>
            <person name="van der Klei I.J."/>
            <person name="van Peij N.N.M.E."/>
            <person name="Veenhuis M."/>
            <person name="von Doehren H."/>
            <person name="Wagner C."/>
            <person name="Wortman J.R."/>
            <person name="Bovenberg R.A.L."/>
        </authorList>
    </citation>
    <scope>NUCLEOTIDE SEQUENCE [LARGE SCALE GENOMIC DNA]</scope>
    <source>
        <strain>ATCC 28089 / DSM 1075 / NRRL 1951 / Wisconsin 54-1255</strain>
    </source>
</reference>
<reference key="2">
    <citation type="journal article" date="2014" name="Chem. Sci.">
        <title>Oxidative dearomatisation: the key step of sorbicillinoid biosynthesis.</title>
        <authorList>
            <person name="Fahad A.A."/>
            <person name="Abood A."/>
            <person name="Fisch K.M."/>
            <person name="Osipow A."/>
            <person name="Davison J."/>
            <person name="Avramovic M."/>
            <person name="Butts C.P."/>
            <person name="Piel J."/>
            <person name="Simpson T.J."/>
            <person name="Cox R.J."/>
        </authorList>
    </citation>
    <scope>FUNCTION</scope>
</reference>
<reference key="3">
    <citation type="journal article" date="2017" name="Microb. Biotechnol.">
        <title>Mechanism and regulation of sorbicillin biosynthesis by Penicillium chrysogenum.</title>
        <authorList>
            <person name="Guzman-Chavez F."/>
            <person name="Salo O."/>
            <person name="Nygaard Y."/>
            <person name="Lankhorst P.P."/>
            <person name="Bovenberg R.A.L."/>
            <person name="Driessen A.J.M."/>
        </authorList>
    </citation>
    <scope>FUNCTION</scope>
    <scope>DISRUPTION PHENOTYPE</scope>
</reference>
<organism>
    <name type="scientific">Penicillium rubens (strain ATCC 28089 / DSM 1075 / NRRL 1951 / Wisconsin 54-1255)</name>
    <name type="common">Penicillium chrysogenum</name>
    <dbReference type="NCBI Taxonomy" id="500485"/>
    <lineage>
        <taxon>Eukaryota</taxon>
        <taxon>Fungi</taxon>
        <taxon>Dikarya</taxon>
        <taxon>Ascomycota</taxon>
        <taxon>Pezizomycotina</taxon>
        <taxon>Eurotiomycetes</taxon>
        <taxon>Eurotiomycetidae</taxon>
        <taxon>Eurotiales</taxon>
        <taxon>Aspergillaceae</taxon>
        <taxon>Penicillium</taxon>
        <taxon>Penicillium chrysogenum species complex</taxon>
    </lineage>
</organism>
<comment type="function">
    <text evidence="2 5 6">FAD-dependent monooxygenase; part of the gene cluster that mediates the biosynthesis of sorbicillinoids, a diverse group of yellow secondary metabolites that restrict growth of competing pathogenic fungi but not of bacteria (PubMed:25580210, PubMed:28618182). Sorbicillinoids biosynthesis requires the action of two PKSs (PubMed:25580210). SorA iteratively combines three acetyl units and the growing chain is modified by the ketoacyl reductase subunit, and optional by the enoyl reductase subunit in the second cycle (PubMed:25580210). The polyketide is then handed over to the PKS SorB, which adds three more acetyl units, and two methyl groups (PubMed:25580210). SorB releases an aldehyde, which undergoes spontaneous cyclization resulting in the formation of sorbicillin or 2',3'-dihydrosorbicillin (PubMed:25580210). The monooxygenase sorC oxidizes sorbicillin and 2',3'-dihydrosorbicillin to 2',3'-dihydrosorbicillinol and sorbicillinol, respectively (PubMed:28618182). The oxidoreductase sorD further converts sorbicillinol into oxosorbicillinol (PubMed:28618182). Sorbicillinol is the building block for the other sorbicillinoids such as disorbicillinol, bisvertinolon, and dihydrobisvertinolone (By similarity).</text>
</comment>
<comment type="cofactor">
    <cofactor evidence="8">
        <name>FAD</name>
        <dbReference type="ChEBI" id="CHEBI:57692"/>
    </cofactor>
</comment>
<comment type="pathway">
    <text evidence="6">Secondary metabolite biosynthesis.</text>
</comment>
<comment type="subcellular location">
    <subcellularLocation>
        <location evidence="3">Membrane</location>
        <topology evidence="3">Single-pass membrane protein</topology>
    </subcellularLocation>
</comment>
<comment type="disruption phenotype">
    <text evidence="6">Leads to the accumulation of dihydrosorbicillinol (PubMed:28618182).</text>
</comment>
<comment type="similarity">
    <text evidence="8">Belongs to the paxM FAD-dependent monooxygenase family.</text>
</comment>
<accession>B6HN76</accession>
<gene>
    <name evidence="7" type="primary">sorC</name>
    <name type="ORF">Pc21g05060</name>
</gene>
<feature type="chain" id="PRO_0000443845" description="FAD-dependent monooxygenase sorC">
    <location>
        <begin position="1"/>
        <end position="445"/>
    </location>
</feature>
<feature type="transmembrane region" description="Helical" evidence="3">
    <location>
        <begin position="8"/>
        <end position="28"/>
    </location>
</feature>
<feature type="active site" evidence="1">
    <location>
        <position position="201"/>
    </location>
</feature>
<feature type="binding site" evidence="1">
    <location>
        <position position="38"/>
    </location>
    <ligand>
        <name>FAD</name>
        <dbReference type="ChEBI" id="CHEBI:57692"/>
    </ligand>
</feature>
<feature type="binding site" evidence="1">
    <location>
        <position position="119"/>
    </location>
    <ligand>
        <name>FAD</name>
        <dbReference type="ChEBI" id="CHEBI:57692"/>
    </ligand>
</feature>
<feature type="binding site" evidence="1">
    <location>
        <position position="323"/>
    </location>
    <ligand>
        <name>FAD</name>
        <dbReference type="ChEBI" id="CHEBI:57692"/>
    </ligand>
</feature>
<feature type="binding site" evidence="1">
    <location>
        <position position="336"/>
    </location>
    <ligand>
        <name>FAD</name>
        <dbReference type="ChEBI" id="CHEBI:57692"/>
    </ligand>
</feature>
<feature type="glycosylation site" description="N-linked (GlcNAc...) asparagine" evidence="4">
    <location>
        <position position="31"/>
    </location>
</feature>
<feature type="glycosylation site" description="N-linked (GlcNAc...) asparagine" evidence="4">
    <location>
        <position position="358"/>
    </location>
</feature>
<evidence type="ECO:0000250" key="1">
    <source>
        <dbReference type="UniProtKB" id="B8M9J8"/>
    </source>
</evidence>
<evidence type="ECO:0000250" key="2">
    <source>
        <dbReference type="UniProtKB" id="G0R6T0"/>
    </source>
</evidence>
<evidence type="ECO:0000255" key="3"/>
<evidence type="ECO:0000255" key="4">
    <source>
        <dbReference type="PROSITE-ProRule" id="PRU00498"/>
    </source>
</evidence>
<evidence type="ECO:0000269" key="5">
    <source>
    </source>
</evidence>
<evidence type="ECO:0000269" key="6">
    <source>
    </source>
</evidence>
<evidence type="ECO:0000303" key="7">
    <source>
    </source>
</evidence>
<evidence type="ECO:0000305" key="8"/>
<evidence type="ECO:0000305" key="9">
    <source>
    </source>
</evidence>
<keyword id="KW-0274">FAD</keyword>
<keyword id="KW-0285">Flavoprotein</keyword>
<keyword id="KW-0325">Glycoprotein</keyword>
<keyword id="KW-0472">Membrane</keyword>
<keyword id="KW-0503">Monooxygenase</keyword>
<keyword id="KW-0560">Oxidoreductase</keyword>
<keyword id="KW-1185">Reference proteome</keyword>
<keyword id="KW-0812">Transmembrane</keyword>
<keyword id="KW-1133">Transmembrane helix</keyword>
<dbReference type="EC" id="1.-.-.-" evidence="9"/>
<dbReference type="EMBL" id="AM920436">
    <property type="protein sequence ID" value="CAP95403.1"/>
    <property type="molecule type" value="Genomic_DNA"/>
</dbReference>
<dbReference type="RefSeq" id="XP_002567552.1">
    <property type="nucleotide sequence ID" value="XM_002567506.1"/>
</dbReference>
<dbReference type="SMR" id="B6HN76"/>
<dbReference type="STRING" id="500485.B6HN76"/>
<dbReference type="GlyCosmos" id="B6HN76">
    <property type="glycosylation" value="2 sites, No reported glycans"/>
</dbReference>
<dbReference type="GeneID" id="8313803"/>
<dbReference type="KEGG" id="pcs:N7525_006987"/>
<dbReference type="VEuPathDB" id="FungiDB:PCH_Pc21g05060"/>
<dbReference type="eggNOG" id="KOG2614">
    <property type="taxonomic scope" value="Eukaryota"/>
</dbReference>
<dbReference type="HOGENOM" id="CLU_009665_6_3_1"/>
<dbReference type="OMA" id="GEMYEWQ"/>
<dbReference type="OrthoDB" id="417877at2759"/>
<dbReference type="BioCyc" id="PCHR:PC21G05060-MONOMER"/>
<dbReference type="Proteomes" id="UP000000724">
    <property type="component" value="Contig Pc00c21"/>
</dbReference>
<dbReference type="GO" id="GO:0016020">
    <property type="term" value="C:membrane"/>
    <property type="evidence" value="ECO:0007669"/>
    <property type="project" value="UniProtKB-SubCell"/>
</dbReference>
<dbReference type="GO" id="GO:0071949">
    <property type="term" value="F:FAD binding"/>
    <property type="evidence" value="ECO:0007669"/>
    <property type="project" value="InterPro"/>
</dbReference>
<dbReference type="GO" id="GO:0004497">
    <property type="term" value="F:monooxygenase activity"/>
    <property type="evidence" value="ECO:0007669"/>
    <property type="project" value="UniProtKB-KW"/>
</dbReference>
<dbReference type="GO" id="GO:0044550">
    <property type="term" value="P:secondary metabolite biosynthetic process"/>
    <property type="evidence" value="ECO:0007669"/>
    <property type="project" value="TreeGrafter"/>
</dbReference>
<dbReference type="Gene3D" id="3.50.50.60">
    <property type="entry name" value="FAD/NAD(P)-binding domain"/>
    <property type="match status" value="1"/>
</dbReference>
<dbReference type="InterPro" id="IPR002938">
    <property type="entry name" value="FAD-bd"/>
</dbReference>
<dbReference type="InterPro" id="IPR036188">
    <property type="entry name" value="FAD/NAD-bd_sf"/>
</dbReference>
<dbReference type="InterPro" id="IPR051104">
    <property type="entry name" value="FAD_monoxygenase"/>
</dbReference>
<dbReference type="PANTHER" id="PTHR46720:SF3">
    <property type="entry name" value="FAD-BINDING DOMAIN-CONTAINING PROTEIN-RELATED"/>
    <property type="match status" value="1"/>
</dbReference>
<dbReference type="PANTHER" id="PTHR46720">
    <property type="entry name" value="HYDROXYLASE, PUTATIVE (AFU_ORTHOLOGUE AFUA_3G01460)-RELATED"/>
    <property type="match status" value="1"/>
</dbReference>
<dbReference type="Pfam" id="PF01494">
    <property type="entry name" value="FAD_binding_3"/>
    <property type="match status" value="1"/>
</dbReference>
<dbReference type="PRINTS" id="PR00420">
    <property type="entry name" value="RNGMNOXGNASE"/>
</dbReference>
<dbReference type="SUPFAM" id="SSF51905">
    <property type="entry name" value="FAD/NAD(P)-binding domain"/>
    <property type="match status" value="1"/>
</dbReference>
<sequence>MTRSANSPFEVAIVGGGITGLALAVGLLKRNVSFTIYERAENFGELGVGITFTPNAQRAMEALDPCVLQSFTNVASAPSGGTINFVDGVREQGSEDPRTSTAALLFQLHVKGGYKACRRCDFVDQIVQHIPKDCVQYRKWLDSIETDHESGRAVLKFRDGEIAHADVVIGCDGIRSQVRASMFGTDELCPRAQYSHQLGYRGMVPLAQATAVLGPEKTSSAVLHTGPGAFVLTIPLAEVHAMHIEAFIMDKEEWPEVQTSSDSKRYVLPATRNEATKAFAEFGPTVRSAVSMFPEKLEKWAVFDMLEAPVPTFAKGRVCLAGDAAHASTPNQGGGAGFGIEDALVLAEVLAVLAEAPNVSGIVASEALAVYSEVRYERSQWLVRSSRRTGELCTWKDRDWGLAAEELSRDIISRSHQLWDHDTAGMVSDALAILGERVRGADTAF</sequence>